<protein>
    <recommendedName>
        <fullName evidence="1">Aspartyl/glutamyl-tRNA(Asn/Gln) amidotransferase subunit B</fullName>
        <shortName evidence="1">Asp/Glu-ADT subunit B</shortName>
        <ecNumber evidence="1">6.3.5.-</ecNumber>
    </recommendedName>
</protein>
<dbReference type="EC" id="6.3.5.-" evidence="1"/>
<dbReference type="EMBL" id="CP000425">
    <property type="protein sequence ID" value="ABJ71790.1"/>
    <property type="molecule type" value="Genomic_DNA"/>
</dbReference>
<dbReference type="RefSeq" id="WP_011675223.1">
    <property type="nucleotide sequence ID" value="NC_008527.1"/>
</dbReference>
<dbReference type="SMR" id="Q032T2"/>
<dbReference type="KEGG" id="llc:LACR_0171"/>
<dbReference type="HOGENOM" id="CLU_019240_0_0_9"/>
<dbReference type="Proteomes" id="UP000000240">
    <property type="component" value="Chromosome"/>
</dbReference>
<dbReference type="GO" id="GO:0050566">
    <property type="term" value="F:asparaginyl-tRNA synthase (glutamine-hydrolyzing) activity"/>
    <property type="evidence" value="ECO:0007669"/>
    <property type="project" value="RHEA"/>
</dbReference>
<dbReference type="GO" id="GO:0005524">
    <property type="term" value="F:ATP binding"/>
    <property type="evidence" value="ECO:0007669"/>
    <property type="project" value="UniProtKB-KW"/>
</dbReference>
<dbReference type="GO" id="GO:0050567">
    <property type="term" value="F:glutaminyl-tRNA synthase (glutamine-hydrolyzing) activity"/>
    <property type="evidence" value="ECO:0007669"/>
    <property type="project" value="UniProtKB-UniRule"/>
</dbReference>
<dbReference type="GO" id="GO:0070681">
    <property type="term" value="P:glutaminyl-tRNAGln biosynthesis via transamidation"/>
    <property type="evidence" value="ECO:0007669"/>
    <property type="project" value="TreeGrafter"/>
</dbReference>
<dbReference type="GO" id="GO:0006412">
    <property type="term" value="P:translation"/>
    <property type="evidence" value="ECO:0007669"/>
    <property type="project" value="UniProtKB-UniRule"/>
</dbReference>
<dbReference type="FunFam" id="1.10.10.410:FF:000001">
    <property type="entry name" value="Aspartyl/glutamyl-tRNA(Asn/Gln) amidotransferase subunit B"/>
    <property type="match status" value="1"/>
</dbReference>
<dbReference type="Gene3D" id="1.10.10.410">
    <property type="match status" value="1"/>
</dbReference>
<dbReference type="Gene3D" id="1.10.150.380">
    <property type="entry name" value="GatB domain, N-terminal subdomain"/>
    <property type="match status" value="1"/>
</dbReference>
<dbReference type="HAMAP" id="MF_00121">
    <property type="entry name" value="GatB"/>
    <property type="match status" value="1"/>
</dbReference>
<dbReference type="InterPro" id="IPR017959">
    <property type="entry name" value="Asn/Gln-tRNA_amidoTrfase_suB/E"/>
</dbReference>
<dbReference type="InterPro" id="IPR006075">
    <property type="entry name" value="Asn/Gln-tRNA_Trfase_suB/E_cat"/>
</dbReference>
<dbReference type="InterPro" id="IPR018027">
    <property type="entry name" value="Asn/Gln_amidotransferase"/>
</dbReference>
<dbReference type="InterPro" id="IPR003789">
    <property type="entry name" value="Asn/Gln_tRNA_amidoTrase-B-like"/>
</dbReference>
<dbReference type="InterPro" id="IPR004413">
    <property type="entry name" value="GatB"/>
</dbReference>
<dbReference type="InterPro" id="IPR042114">
    <property type="entry name" value="GatB_C_1"/>
</dbReference>
<dbReference type="InterPro" id="IPR023168">
    <property type="entry name" value="GatB_Yqey_C_2"/>
</dbReference>
<dbReference type="InterPro" id="IPR017958">
    <property type="entry name" value="Gln-tRNA_amidoTrfase_suB_CS"/>
</dbReference>
<dbReference type="InterPro" id="IPR014746">
    <property type="entry name" value="Gln_synth/guanido_kin_cat_dom"/>
</dbReference>
<dbReference type="NCBIfam" id="TIGR00133">
    <property type="entry name" value="gatB"/>
    <property type="match status" value="1"/>
</dbReference>
<dbReference type="NCBIfam" id="NF004011">
    <property type="entry name" value="PRK05477.1-1"/>
    <property type="match status" value="1"/>
</dbReference>
<dbReference type="NCBIfam" id="NF004012">
    <property type="entry name" value="PRK05477.1-2"/>
    <property type="match status" value="1"/>
</dbReference>
<dbReference type="NCBIfam" id="NF004014">
    <property type="entry name" value="PRK05477.1-4"/>
    <property type="match status" value="1"/>
</dbReference>
<dbReference type="PANTHER" id="PTHR11659">
    <property type="entry name" value="GLUTAMYL-TRNA GLN AMIDOTRANSFERASE SUBUNIT B MITOCHONDRIAL AND PROKARYOTIC PET112-RELATED"/>
    <property type="match status" value="1"/>
</dbReference>
<dbReference type="PANTHER" id="PTHR11659:SF0">
    <property type="entry name" value="GLUTAMYL-TRNA(GLN) AMIDOTRANSFERASE SUBUNIT B, MITOCHONDRIAL"/>
    <property type="match status" value="1"/>
</dbReference>
<dbReference type="Pfam" id="PF02934">
    <property type="entry name" value="GatB_N"/>
    <property type="match status" value="1"/>
</dbReference>
<dbReference type="Pfam" id="PF02637">
    <property type="entry name" value="GatB_Yqey"/>
    <property type="match status" value="1"/>
</dbReference>
<dbReference type="SMART" id="SM00845">
    <property type="entry name" value="GatB_Yqey"/>
    <property type="match status" value="1"/>
</dbReference>
<dbReference type="SUPFAM" id="SSF89095">
    <property type="entry name" value="GatB/YqeY motif"/>
    <property type="match status" value="1"/>
</dbReference>
<dbReference type="SUPFAM" id="SSF55931">
    <property type="entry name" value="Glutamine synthetase/guanido kinase"/>
    <property type="match status" value="1"/>
</dbReference>
<dbReference type="PROSITE" id="PS01234">
    <property type="entry name" value="GATB"/>
    <property type="match status" value="1"/>
</dbReference>
<name>GATB_LACLS</name>
<reference key="1">
    <citation type="journal article" date="2006" name="Proc. Natl. Acad. Sci. U.S.A.">
        <title>Comparative genomics of the lactic acid bacteria.</title>
        <authorList>
            <person name="Makarova K.S."/>
            <person name="Slesarev A."/>
            <person name="Wolf Y.I."/>
            <person name="Sorokin A."/>
            <person name="Mirkin B."/>
            <person name="Koonin E.V."/>
            <person name="Pavlov A."/>
            <person name="Pavlova N."/>
            <person name="Karamychev V."/>
            <person name="Polouchine N."/>
            <person name="Shakhova V."/>
            <person name="Grigoriev I."/>
            <person name="Lou Y."/>
            <person name="Rohksar D."/>
            <person name="Lucas S."/>
            <person name="Huang K."/>
            <person name="Goodstein D.M."/>
            <person name="Hawkins T."/>
            <person name="Plengvidhya V."/>
            <person name="Welker D."/>
            <person name="Hughes J."/>
            <person name="Goh Y."/>
            <person name="Benson A."/>
            <person name="Baldwin K."/>
            <person name="Lee J.-H."/>
            <person name="Diaz-Muniz I."/>
            <person name="Dosti B."/>
            <person name="Smeianov V."/>
            <person name="Wechter W."/>
            <person name="Barabote R."/>
            <person name="Lorca G."/>
            <person name="Altermann E."/>
            <person name="Barrangou R."/>
            <person name="Ganesan B."/>
            <person name="Xie Y."/>
            <person name="Rawsthorne H."/>
            <person name="Tamir D."/>
            <person name="Parker C."/>
            <person name="Breidt F."/>
            <person name="Broadbent J.R."/>
            <person name="Hutkins R."/>
            <person name="O'Sullivan D."/>
            <person name="Steele J."/>
            <person name="Unlu G."/>
            <person name="Saier M.H. Jr."/>
            <person name="Klaenhammer T."/>
            <person name="Richardson P."/>
            <person name="Kozyavkin S."/>
            <person name="Weimer B.C."/>
            <person name="Mills D.A."/>
        </authorList>
    </citation>
    <scope>NUCLEOTIDE SEQUENCE [LARGE SCALE GENOMIC DNA]</scope>
    <source>
        <strain>SK11</strain>
    </source>
</reference>
<organism>
    <name type="scientific">Lactococcus lactis subsp. cremoris (strain SK11)</name>
    <dbReference type="NCBI Taxonomy" id="272622"/>
    <lineage>
        <taxon>Bacteria</taxon>
        <taxon>Bacillati</taxon>
        <taxon>Bacillota</taxon>
        <taxon>Bacilli</taxon>
        <taxon>Lactobacillales</taxon>
        <taxon>Streptococcaceae</taxon>
        <taxon>Lactococcus</taxon>
        <taxon>Lactococcus cremoris subsp. cremoris</taxon>
    </lineage>
</organism>
<feature type="chain" id="PRO_1000015982" description="Aspartyl/glutamyl-tRNA(Asn/Gln) amidotransferase subunit B">
    <location>
        <begin position="1"/>
        <end position="477"/>
    </location>
</feature>
<proteinExistence type="inferred from homology"/>
<evidence type="ECO:0000255" key="1">
    <source>
        <dbReference type="HAMAP-Rule" id="MF_00121"/>
    </source>
</evidence>
<sequence>MNFETVIGLEVHVELSTNSKIFSPASTKFGGDPNSNTNVIDWSLPGVLPVMNKGVIDSGIKAALALNMDIHKSMHFDRKNYFYPDNPKAYQISQFDEPIGYNGSIEIELEDGHKATIRIERAHLEEDAGKNTHGTDGYSYVDLNRQGVPLIEIVSEADMRTPEEAYAYLTALKEAILYTGISDVKMEEGSMRCDANVSLRPYGQEAFGVKTEVKNMNSFSNVKKALDFEVARQAKILRAGGEIRQETRRFNDKTGETILMRVKEGASDYRYFPEPDVPRFEISDEWIEQMRESLPMTATARRAHYINDLGLSDYDARQLTATKEVSDFFDQAIKFDTDPKLVSNWLQGEVAQYLNSEKKELHEIGLTPENLTEMIRLISDGTISSKIAKKVFIELAKNGGSAEEFVKKAGLVQISDPDLLLPIIHEVFAKNEQSVADYRGGKQNAAKALVGQLMKATKGQANPTVAQKLLYQELDNF</sequence>
<comment type="function">
    <text evidence="1">Allows the formation of correctly charged Asn-tRNA(Asn) or Gln-tRNA(Gln) through the transamidation of misacylated Asp-tRNA(Asn) or Glu-tRNA(Gln) in organisms which lack either or both of asparaginyl-tRNA or glutaminyl-tRNA synthetases. The reaction takes place in the presence of glutamine and ATP through an activated phospho-Asp-tRNA(Asn) or phospho-Glu-tRNA(Gln).</text>
</comment>
<comment type="catalytic activity">
    <reaction evidence="1">
        <text>L-glutamyl-tRNA(Gln) + L-glutamine + ATP + H2O = L-glutaminyl-tRNA(Gln) + L-glutamate + ADP + phosphate + H(+)</text>
        <dbReference type="Rhea" id="RHEA:17521"/>
        <dbReference type="Rhea" id="RHEA-COMP:9681"/>
        <dbReference type="Rhea" id="RHEA-COMP:9684"/>
        <dbReference type="ChEBI" id="CHEBI:15377"/>
        <dbReference type="ChEBI" id="CHEBI:15378"/>
        <dbReference type="ChEBI" id="CHEBI:29985"/>
        <dbReference type="ChEBI" id="CHEBI:30616"/>
        <dbReference type="ChEBI" id="CHEBI:43474"/>
        <dbReference type="ChEBI" id="CHEBI:58359"/>
        <dbReference type="ChEBI" id="CHEBI:78520"/>
        <dbReference type="ChEBI" id="CHEBI:78521"/>
        <dbReference type="ChEBI" id="CHEBI:456216"/>
    </reaction>
</comment>
<comment type="catalytic activity">
    <reaction evidence="1">
        <text>L-aspartyl-tRNA(Asn) + L-glutamine + ATP + H2O = L-asparaginyl-tRNA(Asn) + L-glutamate + ADP + phosphate + 2 H(+)</text>
        <dbReference type="Rhea" id="RHEA:14513"/>
        <dbReference type="Rhea" id="RHEA-COMP:9674"/>
        <dbReference type="Rhea" id="RHEA-COMP:9677"/>
        <dbReference type="ChEBI" id="CHEBI:15377"/>
        <dbReference type="ChEBI" id="CHEBI:15378"/>
        <dbReference type="ChEBI" id="CHEBI:29985"/>
        <dbReference type="ChEBI" id="CHEBI:30616"/>
        <dbReference type="ChEBI" id="CHEBI:43474"/>
        <dbReference type="ChEBI" id="CHEBI:58359"/>
        <dbReference type="ChEBI" id="CHEBI:78515"/>
        <dbReference type="ChEBI" id="CHEBI:78516"/>
        <dbReference type="ChEBI" id="CHEBI:456216"/>
    </reaction>
</comment>
<comment type="subunit">
    <text evidence="1">Heterotrimer of A, B and C subunits.</text>
</comment>
<comment type="similarity">
    <text evidence="1">Belongs to the GatB/GatE family. GatB subfamily.</text>
</comment>
<gene>
    <name evidence="1" type="primary">gatB</name>
    <name type="ordered locus">LACR_0171</name>
</gene>
<accession>Q032T2</accession>
<keyword id="KW-0067">ATP-binding</keyword>
<keyword id="KW-0436">Ligase</keyword>
<keyword id="KW-0547">Nucleotide-binding</keyword>
<keyword id="KW-0648">Protein biosynthesis</keyword>